<accession>P0ADY5</accession>
<accession>P02411</accession>
<name>RL14_ECO57</name>
<proteinExistence type="inferred from homology"/>
<gene>
    <name evidence="1" type="primary">rplN</name>
    <name type="ordered locus">Z4680</name>
    <name type="ordered locus">ECs4175</name>
</gene>
<reference key="1">
    <citation type="journal article" date="2001" name="Nature">
        <title>Genome sequence of enterohaemorrhagic Escherichia coli O157:H7.</title>
        <authorList>
            <person name="Perna N.T."/>
            <person name="Plunkett G. III"/>
            <person name="Burland V."/>
            <person name="Mau B."/>
            <person name="Glasner J.D."/>
            <person name="Rose D.J."/>
            <person name="Mayhew G.F."/>
            <person name="Evans P.S."/>
            <person name="Gregor J."/>
            <person name="Kirkpatrick H.A."/>
            <person name="Posfai G."/>
            <person name="Hackett J."/>
            <person name="Klink S."/>
            <person name="Boutin A."/>
            <person name="Shao Y."/>
            <person name="Miller L."/>
            <person name="Grotbeck E.J."/>
            <person name="Davis N.W."/>
            <person name="Lim A."/>
            <person name="Dimalanta E.T."/>
            <person name="Potamousis K."/>
            <person name="Apodaca J."/>
            <person name="Anantharaman T.S."/>
            <person name="Lin J."/>
            <person name="Yen G."/>
            <person name="Schwartz D.C."/>
            <person name="Welch R.A."/>
            <person name="Blattner F.R."/>
        </authorList>
    </citation>
    <scope>NUCLEOTIDE SEQUENCE [LARGE SCALE GENOMIC DNA]</scope>
    <source>
        <strain>O157:H7 / EDL933 / ATCC 700927 / EHEC</strain>
    </source>
</reference>
<reference key="2">
    <citation type="journal article" date="2001" name="DNA Res.">
        <title>Complete genome sequence of enterohemorrhagic Escherichia coli O157:H7 and genomic comparison with a laboratory strain K-12.</title>
        <authorList>
            <person name="Hayashi T."/>
            <person name="Makino K."/>
            <person name="Ohnishi M."/>
            <person name="Kurokawa K."/>
            <person name="Ishii K."/>
            <person name="Yokoyama K."/>
            <person name="Han C.-G."/>
            <person name="Ohtsubo E."/>
            <person name="Nakayama K."/>
            <person name="Murata T."/>
            <person name="Tanaka M."/>
            <person name="Tobe T."/>
            <person name="Iida T."/>
            <person name="Takami H."/>
            <person name="Honda T."/>
            <person name="Sasakawa C."/>
            <person name="Ogasawara N."/>
            <person name="Yasunaga T."/>
            <person name="Kuhara S."/>
            <person name="Shiba T."/>
            <person name="Hattori M."/>
            <person name="Shinagawa H."/>
        </authorList>
    </citation>
    <scope>NUCLEOTIDE SEQUENCE [LARGE SCALE GENOMIC DNA]</scope>
    <source>
        <strain>O157:H7 / Sakai / RIMD 0509952 / EHEC</strain>
    </source>
</reference>
<comment type="function">
    <text evidence="1">Binds to 23S rRNA. Forms part of two intersubunit bridges in the 70S ribosome.</text>
</comment>
<comment type="subunit">
    <text evidence="1">Part of the 50S ribosomal subunit. Forms a cluster with proteins L3 and L19. In the 70S ribosome, L14 and L19 interact and together make contacts with the 16S rRNA in bridges B5 and B8.</text>
</comment>
<comment type="similarity">
    <text evidence="1">Belongs to the universal ribosomal protein uL14 family.</text>
</comment>
<dbReference type="EMBL" id="AE005174">
    <property type="protein sequence ID" value="AAG58431.1"/>
    <property type="molecule type" value="Genomic_DNA"/>
</dbReference>
<dbReference type="EMBL" id="BA000007">
    <property type="protein sequence ID" value="BAB37598.1"/>
    <property type="molecule type" value="Genomic_DNA"/>
</dbReference>
<dbReference type="PIR" id="C85996">
    <property type="entry name" value="C85996"/>
</dbReference>
<dbReference type="PIR" id="G91150">
    <property type="entry name" value="G91150"/>
</dbReference>
<dbReference type="RefSeq" id="NP_312202.1">
    <property type="nucleotide sequence ID" value="NC_002695.1"/>
</dbReference>
<dbReference type="RefSeq" id="WP_000613955.1">
    <property type="nucleotide sequence ID" value="NZ_VOAI01000041.1"/>
</dbReference>
<dbReference type="SMR" id="P0ADY5"/>
<dbReference type="STRING" id="155864.Z4680"/>
<dbReference type="GeneID" id="915973"/>
<dbReference type="GeneID" id="93778677"/>
<dbReference type="KEGG" id="ece:Z4680"/>
<dbReference type="KEGG" id="ecs:ECs_4175"/>
<dbReference type="PATRIC" id="fig|386585.9.peg.4358"/>
<dbReference type="eggNOG" id="COG0093">
    <property type="taxonomic scope" value="Bacteria"/>
</dbReference>
<dbReference type="HOGENOM" id="CLU_095071_2_1_6"/>
<dbReference type="OMA" id="MIQMQTR"/>
<dbReference type="Proteomes" id="UP000000558">
    <property type="component" value="Chromosome"/>
</dbReference>
<dbReference type="Proteomes" id="UP000002519">
    <property type="component" value="Chromosome"/>
</dbReference>
<dbReference type="GO" id="GO:0022625">
    <property type="term" value="C:cytosolic large ribosomal subunit"/>
    <property type="evidence" value="ECO:0007669"/>
    <property type="project" value="TreeGrafter"/>
</dbReference>
<dbReference type="GO" id="GO:0070180">
    <property type="term" value="F:large ribosomal subunit rRNA binding"/>
    <property type="evidence" value="ECO:0007669"/>
    <property type="project" value="TreeGrafter"/>
</dbReference>
<dbReference type="GO" id="GO:0003735">
    <property type="term" value="F:structural constituent of ribosome"/>
    <property type="evidence" value="ECO:0007669"/>
    <property type="project" value="InterPro"/>
</dbReference>
<dbReference type="GO" id="GO:0006412">
    <property type="term" value="P:translation"/>
    <property type="evidence" value="ECO:0007669"/>
    <property type="project" value="UniProtKB-UniRule"/>
</dbReference>
<dbReference type="CDD" id="cd00337">
    <property type="entry name" value="Ribosomal_uL14"/>
    <property type="match status" value="1"/>
</dbReference>
<dbReference type="FunFam" id="2.40.150.20:FF:000001">
    <property type="entry name" value="50S ribosomal protein L14"/>
    <property type="match status" value="1"/>
</dbReference>
<dbReference type="Gene3D" id="2.40.150.20">
    <property type="entry name" value="Ribosomal protein L14"/>
    <property type="match status" value="1"/>
</dbReference>
<dbReference type="HAMAP" id="MF_01367">
    <property type="entry name" value="Ribosomal_uL14"/>
    <property type="match status" value="1"/>
</dbReference>
<dbReference type="InterPro" id="IPR000218">
    <property type="entry name" value="Ribosomal_uL14"/>
</dbReference>
<dbReference type="InterPro" id="IPR005745">
    <property type="entry name" value="Ribosomal_uL14_bac-type"/>
</dbReference>
<dbReference type="InterPro" id="IPR019972">
    <property type="entry name" value="Ribosomal_uL14_CS"/>
</dbReference>
<dbReference type="InterPro" id="IPR036853">
    <property type="entry name" value="Ribosomal_uL14_sf"/>
</dbReference>
<dbReference type="NCBIfam" id="TIGR01067">
    <property type="entry name" value="rplN_bact"/>
    <property type="match status" value="1"/>
</dbReference>
<dbReference type="PANTHER" id="PTHR11761">
    <property type="entry name" value="50S/60S RIBOSOMAL PROTEIN L14/L23"/>
    <property type="match status" value="1"/>
</dbReference>
<dbReference type="PANTHER" id="PTHR11761:SF3">
    <property type="entry name" value="LARGE RIBOSOMAL SUBUNIT PROTEIN UL14M"/>
    <property type="match status" value="1"/>
</dbReference>
<dbReference type="Pfam" id="PF00238">
    <property type="entry name" value="Ribosomal_L14"/>
    <property type="match status" value="1"/>
</dbReference>
<dbReference type="SMART" id="SM01374">
    <property type="entry name" value="Ribosomal_L14"/>
    <property type="match status" value="1"/>
</dbReference>
<dbReference type="SUPFAM" id="SSF50193">
    <property type="entry name" value="Ribosomal protein L14"/>
    <property type="match status" value="1"/>
</dbReference>
<dbReference type="PROSITE" id="PS00049">
    <property type="entry name" value="RIBOSOMAL_L14"/>
    <property type="match status" value="1"/>
</dbReference>
<sequence length="123" mass="13541">MIQEQTMLNVADNSGARRVMCIKVLGGSHRRYAGVGDIIKITIKEAIPRGKVKKGDVLKAVVVRTKKGVRRPDGSVIRFDGNACVLLNNNSEQPIGTRIFGPVTRELRSEKFMKIISLAPEVL</sequence>
<organism>
    <name type="scientific">Escherichia coli O157:H7</name>
    <dbReference type="NCBI Taxonomy" id="83334"/>
    <lineage>
        <taxon>Bacteria</taxon>
        <taxon>Pseudomonadati</taxon>
        <taxon>Pseudomonadota</taxon>
        <taxon>Gammaproteobacteria</taxon>
        <taxon>Enterobacterales</taxon>
        <taxon>Enterobacteriaceae</taxon>
        <taxon>Escherichia</taxon>
    </lineage>
</organism>
<feature type="chain" id="PRO_0000128541" description="Large ribosomal subunit protein uL14">
    <location>
        <begin position="1"/>
        <end position="123"/>
    </location>
</feature>
<protein>
    <recommendedName>
        <fullName evidence="1">Large ribosomal subunit protein uL14</fullName>
    </recommendedName>
    <alternativeName>
        <fullName evidence="2">50S ribosomal protein L14</fullName>
    </alternativeName>
</protein>
<keyword id="KW-1185">Reference proteome</keyword>
<keyword id="KW-0687">Ribonucleoprotein</keyword>
<keyword id="KW-0689">Ribosomal protein</keyword>
<keyword id="KW-0694">RNA-binding</keyword>
<keyword id="KW-0699">rRNA-binding</keyword>
<evidence type="ECO:0000255" key="1">
    <source>
        <dbReference type="HAMAP-Rule" id="MF_01367"/>
    </source>
</evidence>
<evidence type="ECO:0000305" key="2"/>